<reference key="1">
    <citation type="submission" date="2006-12" db="EMBL/GenBank/DDBJ databases">
        <title>Complete sequence of chromosome 1 of Paracoccus denitrificans PD1222.</title>
        <authorList>
            <person name="Copeland A."/>
            <person name="Lucas S."/>
            <person name="Lapidus A."/>
            <person name="Barry K."/>
            <person name="Detter J.C."/>
            <person name="Glavina del Rio T."/>
            <person name="Hammon N."/>
            <person name="Israni S."/>
            <person name="Dalin E."/>
            <person name="Tice H."/>
            <person name="Pitluck S."/>
            <person name="Munk A.C."/>
            <person name="Brettin T."/>
            <person name="Bruce D."/>
            <person name="Han C."/>
            <person name="Tapia R."/>
            <person name="Gilna P."/>
            <person name="Schmutz J."/>
            <person name="Larimer F."/>
            <person name="Land M."/>
            <person name="Hauser L."/>
            <person name="Kyrpides N."/>
            <person name="Lykidis A."/>
            <person name="Spiro S."/>
            <person name="Richardson D.J."/>
            <person name="Moir J.W.B."/>
            <person name="Ferguson S.J."/>
            <person name="van Spanning R.J.M."/>
            <person name="Richardson P."/>
        </authorList>
    </citation>
    <scope>NUCLEOTIDE SEQUENCE [LARGE SCALE GENOMIC DNA]</scope>
    <source>
        <strain>Pd 1222</strain>
    </source>
</reference>
<comment type="similarity">
    <text evidence="1">Belongs to the bacterial ribosomal protein bS21 family.</text>
</comment>
<organism>
    <name type="scientific">Paracoccus denitrificans (strain Pd 1222)</name>
    <dbReference type="NCBI Taxonomy" id="318586"/>
    <lineage>
        <taxon>Bacteria</taxon>
        <taxon>Pseudomonadati</taxon>
        <taxon>Pseudomonadota</taxon>
        <taxon>Alphaproteobacteria</taxon>
        <taxon>Rhodobacterales</taxon>
        <taxon>Paracoccaceae</taxon>
        <taxon>Paracoccus</taxon>
    </lineage>
</organism>
<evidence type="ECO:0000255" key="1">
    <source>
        <dbReference type="HAMAP-Rule" id="MF_00358"/>
    </source>
</evidence>
<evidence type="ECO:0000305" key="2"/>
<proteinExistence type="inferred from homology"/>
<accession>A1B4B5</accession>
<protein>
    <recommendedName>
        <fullName evidence="1">Small ribosomal subunit protein bS21</fullName>
    </recommendedName>
    <alternativeName>
        <fullName evidence="2">30S ribosomal protein S21</fullName>
    </alternativeName>
</protein>
<sequence length="68" mass="7998">MQVSVRDNNVEQALRALKKKLQREGVFREMKLKQHFEKPSVKKAREKAEAVRRARKLARKKAQREGAL</sequence>
<gene>
    <name evidence="1" type="primary">rpsU</name>
    <name type="ordered locus">Pden_2267</name>
</gene>
<keyword id="KW-1185">Reference proteome</keyword>
<keyword id="KW-0687">Ribonucleoprotein</keyword>
<keyword id="KW-0689">Ribosomal protein</keyword>
<feature type="chain" id="PRO_1000005145" description="Small ribosomal subunit protein bS21">
    <location>
        <begin position="1"/>
        <end position="68"/>
    </location>
</feature>
<name>RS21_PARDP</name>
<dbReference type="EMBL" id="CP000489">
    <property type="protein sequence ID" value="ABL70359.1"/>
    <property type="molecule type" value="Genomic_DNA"/>
</dbReference>
<dbReference type="RefSeq" id="WP_011748553.1">
    <property type="nucleotide sequence ID" value="NC_008686.1"/>
</dbReference>
<dbReference type="SMR" id="A1B4B5"/>
<dbReference type="STRING" id="318586.Pden_2267"/>
<dbReference type="EnsemblBacteria" id="ABL70359">
    <property type="protein sequence ID" value="ABL70359"/>
    <property type="gene ID" value="Pden_2267"/>
</dbReference>
<dbReference type="GeneID" id="93450666"/>
<dbReference type="KEGG" id="pde:Pden_2267"/>
<dbReference type="eggNOG" id="COG0828">
    <property type="taxonomic scope" value="Bacteria"/>
</dbReference>
<dbReference type="HOGENOM" id="CLU_159258_0_1_5"/>
<dbReference type="OrthoDB" id="9811907at2"/>
<dbReference type="Proteomes" id="UP000000361">
    <property type="component" value="Chromosome 1"/>
</dbReference>
<dbReference type="GO" id="GO:1990904">
    <property type="term" value="C:ribonucleoprotein complex"/>
    <property type="evidence" value="ECO:0007669"/>
    <property type="project" value="UniProtKB-KW"/>
</dbReference>
<dbReference type="GO" id="GO:0005840">
    <property type="term" value="C:ribosome"/>
    <property type="evidence" value="ECO:0007669"/>
    <property type="project" value="UniProtKB-KW"/>
</dbReference>
<dbReference type="GO" id="GO:0003735">
    <property type="term" value="F:structural constituent of ribosome"/>
    <property type="evidence" value="ECO:0007669"/>
    <property type="project" value="InterPro"/>
</dbReference>
<dbReference type="GO" id="GO:0006412">
    <property type="term" value="P:translation"/>
    <property type="evidence" value="ECO:0007669"/>
    <property type="project" value="UniProtKB-UniRule"/>
</dbReference>
<dbReference type="Gene3D" id="1.20.5.1150">
    <property type="entry name" value="Ribosomal protein S8"/>
    <property type="match status" value="1"/>
</dbReference>
<dbReference type="HAMAP" id="MF_00358">
    <property type="entry name" value="Ribosomal_bS21"/>
    <property type="match status" value="1"/>
</dbReference>
<dbReference type="InterPro" id="IPR001911">
    <property type="entry name" value="Ribosomal_bS21"/>
</dbReference>
<dbReference type="InterPro" id="IPR018278">
    <property type="entry name" value="Ribosomal_bS21_CS"/>
</dbReference>
<dbReference type="InterPro" id="IPR038380">
    <property type="entry name" value="Ribosomal_bS21_sf"/>
</dbReference>
<dbReference type="NCBIfam" id="TIGR00030">
    <property type="entry name" value="S21p"/>
    <property type="match status" value="1"/>
</dbReference>
<dbReference type="PANTHER" id="PTHR21109">
    <property type="entry name" value="MITOCHONDRIAL 28S RIBOSOMAL PROTEIN S21"/>
    <property type="match status" value="1"/>
</dbReference>
<dbReference type="PANTHER" id="PTHR21109:SF0">
    <property type="entry name" value="SMALL RIBOSOMAL SUBUNIT PROTEIN BS21M"/>
    <property type="match status" value="1"/>
</dbReference>
<dbReference type="Pfam" id="PF01165">
    <property type="entry name" value="Ribosomal_S21"/>
    <property type="match status" value="1"/>
</dbReference>
<dbReference type="PROSITE" id="PS01181">
    <property type="entry name" value="RIBOSOMAL_S21"/>
    <property type="match status" value="1"/>
</dbReference>